<protein>
    <recommendedName>
        <fullName evidence="1">Enolase</fullName>
        <ecNumber evidence="1">4.2.1.11</ecNumber>
    </recommendedName>
    <alternativeName>
        <fullName evidence="1">2-phospho-D-glycerate hydro-lyase</fullName>
    </alternativeName>
    <alternativeName>
        <fullName evidence="1">2-phosphoglycerate dehydratase</fullName>
    </alternativeName>
</protein>
<feature type="chain" id="PRO_0000280853" description="Enolase">
    <location>
        <begin position="1"/>
        <end position="434"/>
    </location>
</feature>
<feature type="active site" description="Proton donor" evidence="1">
    <location>
        <position position="205"/>
    </location>
</feature>
<feature type="active site" description="Proton acceptor" evidence="1">
    <location>
        <position position="341"/>
    </location>
</feature>
<feature type="binding site" evidence="1">
    <location>
        <position position="163"/>
    </location>
    <ligand>
        <name>(2R)-2-phosphoglycerate</name>
        <dbReference type="ChEBI" id="CHEBI:58289"/>
    </ligand>
</feature>
<feature type="binding site" evidence="1">
    <location>
        <position position="242"/>
    </location>
    <ligand>
        <name>Mg(2+)</name>
        <dbReference type="ChEBI" id="CHEBI:18420"/>
    </ligand>
</feature>
<feature type="binding site" evidence="1">
    <location>
        <position position="289"/>
    </location>
    <ligand>
        <name>Mg(2+)</name>
        <dbReference type="ChEBI" id="CHEBI:18420"/>
    </ligand>
</feature>
<feature type="binding site" evidence="1">
    <location>
        <position position="316"/>
    </location>
    <ligand>
        <name>Mg(2+)</name>
        <dbReference type="ChEBI" id="CHEBI:18420"/>
    </ligand>
</feature>
<feature type="binding site" evidence="1">
    <location>
        <position position="341"/>
    </location>
    <ligand>
        <name>(2R)-2-phosphoglycerate</name>
        <dbReference type="ChEBI" id="CHEBI:58289"/>
    </ligand>
</feature>
<feature type="binding site" evidence="1">
    <location>
        <position position="370"/>
    </location>
    <ligand>
        <name>(2R)-2-phosphoglycerate</name>
        <dbReference type="ChEBI" id="CHEBI:58289"/>
    </ligand>
</feature>
<feature type="binding site" evidence="1">
    <location>
        <position position="371"/>
    </location>
    <ligand>
        <name>(2R)-2-phosphoglycerate</name>
        <dbReference type="ChEBI" id="CHEBI:58289"/>
    </ligand>
</feature>
<feature type="binding site" evidence="1">
    <location>
        <position position="392"/>
    </location>
    <ligand>
        <name>(2R)-2-phosphoglycerate</name>
        <dbReference type="ChEBI" id="CHEBI:58289"/>
    </ligand>
</feature>
<comment type="function">
    <text evidence="1">Catalyzes the reversible conversion of 2-phosphoglycerate (2-PG) into phosphoenolpyruvate (PEP). It is essential for the degradation of carbohydrates via glycolysis.</text>
</comment>
<comment type="catalytic activity">
    <reaction evidence="1">
        <text>(2R)-2-phosphoglycerate = phosphoenolpyruvate + H2O</text>
        <dbReference type="Rhea" id="RHEA:10164"/>
        <dbReference type="ChEBI" id="CHEBI:15377"/>
        <dbReference type="ChEBI" id="CHEBI:58289"/>
        <dbReference type="ChEBI" id="CHEBI:58702"/>
        <dbReference type="EC" id="4.2.1.11"/>
    </reaction>
</comment>
<comment type="cofactor">
    <cofactor evidence="1">
        <name>Mg(2+)</name>
        <dbReference type="ChEBI" id="CHEBI:18420"/>
    </cofactor>
    <text evidence="1">Binds a second Mg(2+) ion via substrate during catalysis.</text>
</comment>
<comment type="pathway">
    <text evidence="1">Carbohydrate degradation; glycolysis; pyruvate from D-glyceraldehyde 3-phosphate: step 4/5.</text>
</comment>
<comment type="subcellular location">
    <subcellularLocation>
        <location evidence="1">Cytoplasm</location>
    </subcellularLocation>
    <subcellularLocation>
        <location evidence="1">Secreted</location>
    </subcellularLocation>
    <subcellularLocation>
        <location evidence="1">Cell surface</location>
    </subcellularLocation>
    <text evidence="1">Fractions of enolase are present in both the cytoplasm and on the cell surface.</text>
</comment>
<comment type="similarity">
    <text evidence="1">Belongs to the enolase family.</text>
</comment>
<evidence type="ECO:0000255" key="1">
    <source>
        <dbReference type="HAMAP-Rule" id="MF_00318"/>
    </source>
</evidence>
<sequence length="434" mass="47087">MSIITDVLAREVLDSRGNPTVEVELYTEDGGFGRALVPSGASTGEHEAVELRDGDKDRFGGKGVLKAVGHVNNEIAKAVIGLDVTEQRLIDQTMIDLDGTPNKGKFGANAILGVSLAAARAAADEVGLPLYQYLGGPNAHVLPTPMMNVLNGGAHSTNTVDFQEFMIMPVGAKSVREAVRMGSETFHALQALLKSKGDITAVGDEGGFAPNLKDNEEAFELLVEAIKKAGYKPGDDIALAFDVAASEMYDAESKTYTTKWSNPDKKYTTEEWTDMIDGYINKYPIVSVEDPIDENDWEGWQTFTKKMGDKVQIVGDDLFVTNTDYLKKGIDMGVANSILIKLNQIGTLTETFEAIEMAKEAGYTAVVSHRSGETEDTTIADLVVATNAGQIKTGSMSRTDRIAKYNQLMRIEDQLGAQSLYKGRKSFYNVKAID</sequence>
<accession>Q03AK4</accession>
<reference key="1">
    <citation type="journal article" date="2006" name="Proc. Natl. Acad. Sci. U.S.A.">
        <title>Comparative genomics of the lactic acid bacteria.</title>
        <authorList>
            <person name="Makarova K.S."/>
            <person name="Slesarev A."/>
            <person name="Wolf Y.I."/>
            <person name="Sorokin A."/>
            <person name="Mirkin B."/>
            <person name="Koonin E.V."/>
            <person name="Pavlov A."/>
            <person name="Pavlova N."/>
            <person name="Karamychev V."/>
            <person name="Polouchine N."/>
            <person name="Shakhova V."/>
            <person name="Grigoriev I."/>
            <person name="Lou Y."/>
            <person name="Rohksar D."/>
            <person name="Lucas S."/>
            <person name="Huang K."/>
            <person name="Goodstein D.M."/>
            <person name="Hawkins T."/>
            <person name="Plengvidhya V."/>
            <person name="Welker D."/>
            <person name="Hughes J."/>
            <person name="Goh Y."/>
            <person name="Benson A."/>
            <person name="Baldwin K."/>
            <person name="Lee J.-H."/>
            <person name="Diaz-Muniz I."/>
            <person name="Dosti B."/>
            <person name="Smeianov V."/>
            <person name="Wechter W."/>
            <person name="Barabote R."/>
            <person name="Lorca G."/>
            <person name="Altermann E."/>
            <person name="Barrangou R."/>
            <person name="Ganesan B."/>
            <person name="Xie Y."/>
            <person name="Rawsthorne H."/>
            <person name="Tamir D."/>
            <person name="Parker C."/>
            <person name="Breidt F."/>
            <person name="Broadbent J.R."/>
            <person name="Hutkins R."/>
            <person name="O'Sullivan D."/>
            <person name="Steele J."/>
            <person name="Unlu G."/>
            <person name="Saier M.H. Jr."/>
            <person name="Klaenhammer T."/>
            <person name="Richardson P."/>
            <person name="Kozyavkin S."/>
            <person name="Weimer B.C."/>
            <person name="Mills D.A."/>
        </authorList>
    </citation>
    <scope>NUCLEOTIDE SEQUENCE [LARGE SCALE GENOMIC DNA]</scope>
    <source>
        <strain>ATCC 334 / BCRC 17002 / CCUG 31169 / CIP 107868 / KCTC 3260 / NRRL B-441</strain>
    </source>
</reference>
<keyword id="KW-0963">Cytoplasm</keyword>
<keyword id="KW-0324">Glycolysis</keyword>
<keyword id="KW-0456">Lyase</keyword>
<keyword id="KW-0460">Magnesium</keyword>
<keyword id="KW-0479">Metal-binding</keyword>
<keyword id="KW-1185">Reference proteome</keyword>
<keyword id="KW-0964">Secreted</keyword>
<name>ENO_LACP3</name>
<gene>
    <name evidence="1" type="primary">eno</name>
    <name type="ordered locus">LSEI_0970</name>
</gene>
<proteinExistence type="inferred from homology"/>
<organism>
    <name type="scientific">Lacticaseibacillus paracasei (strain ATCC 334 / BCRC 17002 / CCUG 31169 / CIP 107868 / KCTC 3260 / NRRL B-441)</name>
    <name type="common">Lactobacillus paracasei</name>
    <dbReference type="NCBI Taxonomy" id="321967"/>
    <lineage>
        <taxon>Bacteria</taxon>
        <taxon>Bacillati</taxon>
        <taxon>Bacillota</taxon>
        <taxon>Bacilli</taxon>
        <taxon>Lactobacillales</taxon>
        <taxon>Lactobacillaceae</taxon>
        <taxon>Lacticaseibacillus</taxon>
    </lineage>
</organism>
<dbReference type="EC" id="4.2.1.11" evidence="1"/>
<dbReference type="EMBL" id="CP000423">
    <property type="protein sequence ID" value="ABJ69768.1"/>
    <property type="molecule type" value="Genomic_DNA"/>
</dbReference>
<dbReference type="RefSeq" id="WP_003564271.1">
    <property type="nucleotide sequence ID" value="NC_008526.1"/>
</dbReference>
<dbReference type="RefSeq" id="YP_806210.1">
    <property type="nucleotide sequence ID" value="NC_008526.1"/>
</dbReference>
<dbReference type="SMR" id="Q03AK4"/>
<dbReference type="STRING" id="321967.LSEI_0970"/>
<dbReference type="PaxDb" id="321967-LSEI_0970"/>
<dbReference type="GeneID" id="57089618"/>
<dbReference type="KEGG" id="lca:LSEI_0970"/>
<dbReference type="PATRIC" id="fig|321967.11.peg.940"/>
<dbReference type="HOGENOM" id="CLU_031223_2_1_9"/>
<dbReference type="UniPathway" id="UPA00109">
    <property type="reaction ID" value="UER00187"/>
</dbReference>
<dbReference type="Proteomes" id="UP000001651">
    <property type="component" value="Chromosome"/>
</dbReference>
<dbReference type="GO" id="GO:0009986">
    <property type="term" value="C:cell surface"/>
    <property type="evidence" value="ECO:0007669"/>
    <property type="project" value="UniProtKB-SubCell"/>
</dbReference>
<dbReference type="GO" id="GO:0005576">
    <property type="term" value="C:extracellular region"/>
    <property type="evidence" value="ECO:0007669"/>
    <property type="project" value="UniProtKB-SubCell"/>
</dbReference>
<dbReference type="GO" id="GO:0000015">
    <property type="term" value="C:phosphopyruvate hydratase complex"/>
    <property type="evidence" value="ECO:0007669"/>
    <property type="project" value="InterPro"/>
</dbReference>
<dbReference type="GO" id="GO:0000287">
    <property type="term" value="F:magnesium ion binding"/>
    <property type="evidence" value="ECO:0007669"/>
    <property type="project" value="UniProtKB-UniRule"/>
</dbReference>
<dbReference type="GO" id="GO:0004634">
    <property type="term" value="F:phosphopyruvate hydratase activity"/>
    <property type="evidence" value="ECO:0007669"/>
    <property type="project" value="UniProtKB-UniRule"/>
</dbReference>
<dbReference type="GO" id="GO:0006096">
    <property type="term" value="P:glycolytic process"/>
    <property type="evidence" value="ECO:0007669"/>
    <property type="project" value="UniProtKB-UniRule"/>
</dbReference>
<dbReference type="CDD" id="cd03313">
    <property type="entry name" value="enolase"/>
    <property type="match status" value="1"/>
</dbReference>
<dbReference type="FunFam" id="3.20.20.120:FF:000001">
    <property type="entry name" value="Enolase"/>
    <property type="match status" value="1"/>
</dbReference>
<dbReference type="FunFam" id="3.30.390.10:FF:000001">
    <property type="entry name" value="Enolase"/>
    <property type="match status" value="1"/>
</dbReference>
<dbReference type="Gene3D" id="3.20.20.120">
    <property type="entry name" value="Enolase-like C-terminal domain"/>
    <property type="match status" value="1"/>
</dbReference>
<dbReference type="Gene3D" id="3.30.390.10">
    <property type="entry name" value="Enolase-like, N-terminal domain"/>
    <property type="match status" value="1"/>
</dbReference>
<dbReference type="HAMAP" id="MF_00318">
    <property type="entry name" value="Enolase"/>
    <property type="match status" value="1"/>
</dbReference>
<dbReference type="InterPro" id="IPR000941">
    <property type="entry name" value="Enolase"/>
</dbReference>
<dbReference type="InterPro" id="IPR036849">
    <property type="entry name" value="Enolase-like_C_sf"/>
</dbReference>
<dbReference type="InterPro" id="IPR029017">
    <property type="entry name" value="Enolase-like_N"/>
</dbReference>
<dbReference type="InterPro" id="IPR020810">
    <property type="entry name" value="Enolase_C"/>
</dbReference>
<dbReference type="InterPro" id="IPR020809">
    <property type="entry name" value="Enolase_CS"/>
</dbReference>
<dbReference type="InterPro" id="IPR020811">
    <property type="entry name" value="Enolase_N"/>
</dbReference>
<dbReference type="NCBIfam" id="TIGR01060">
    <property type="entry name" value="eno"/>
    <property type="match status" value="1"/>
</dbReference>
<dbReference type="PANTHER" id="PTHR11902">
    <property type="entry name" value="ENOLASE"/>
    <property type="match status" value="1"/>
</dbReference>
<dbReference type="PANTHER" id="PTHR11902:SF1">
    <property type="entry name" value="ENOLASE"/>
    <property type="match status" value="1"/>
</dbReference>
<dbReference type="Pfam" id="PF00113">
    <property type="entry name" value="Enolase_C"/>
    <property type="match status" value="1"/>
</dbReference>
<dbReference type="Pfam" id="PF03952">
    <property type="entry name" value="Enolase_N"/>
    <property type="match status" value="1"/>
</dbReference>
<dbReference type="PIRSF" id="PIRSF001400">
    <property type="entry name" value="Enolase"/>
    <property type="match status" value="1"/>
</dbReference>
<dbReference type="PRINTS" id="PR00148">
    <property type="entry name" value="ENOLASE"/>
</dbReference>
<dbReference type="SFLD" id="SFLDS00001">
    <property type="entry name" value="Enolase"/>
    <property type="match status" value="1"/>
</dbReference>
<dbReference type="SFLD" id="SFLDF00002">
    <property type="entry name" value="enolase"/>
    <property type="match status" value="1"/>
</dbReference>
<dbReference type="SMART" id="SM01192">
    <property type="entry name" value="Enolase_C"/>
    <property type="match status" value="1"/>
</dbReference>
<dbReference type="SMART" id="SM01193">
    <property type="entry name" value="Enolase_N"/>
    <property type="match status" value="1"/>
</dbReference>
<dbReference type="SUPFAM" id="SSF51604">
    <property type="entry name" value="Enolase C-terminal domain-like"/>
    <property type="match status" value="1"/>
</dbReference>
<dbReference type="SUPFAM" id="SSF54826">
    <property type="entry name" value="Enolase N-terminal domain-like"/>
    <property type="match status" value="1"/>
</dbReference>
<dbReference type="PROSITE" id="PS00164">
    <property type="entry name" value="ENOLASE"/>
    <property type="match status" value="1"/>
</dbReference>